<evidence type="ECO:0000250" key="1">
    <source>
        <dbReference type="UniProtKB" id="P18405"/>
    </source>
</evidence>
<evidence type="ECO:0000250" key="2">
    <source>
        <dbReference type="UniProtKB" id="P24008"/>
    </source>
</evidence>
<evidence type="ECO:0000255" key="3"/>
<evidence type="ECO:0000305" key="4"/>
<dbReference type="EC" id="1.3.1.22" evidence="1"/>
<dbReference type="EMBL" id="S77162">
    <property type="protein sequence ID" value="AAB34212.1"/>
    <property type="molecule type" value="mRNA"/>
</dbReference>
<dbReference type="RefSeq" id="NP_001274227.1">
    <property type="nucleotide sequence ID" value="NM_001287298.1"/>
</dbReference>
<dbReference type="SMR" id="Q28891"/>
<dbReference type="STRING" id="9541.ENSMFAP00000035539"/>
<dbReference type="Ensembl" id="ENSMFAT00000009778.2">
    <property type="protein sequence ID" value="ENSMFAP00000035539.1"/>
    <property type="gene ID" value="ENSMFAG00000002749.2"/>
</dbReference>
<dbReference type="VEuPathDB" id="HostDB:ENSMFAG00000002749"/>
<dbReference type="eggNOG" id="KOG1638">
    <property type="taxonomic scope" value="Eukaryota"/>
</dbReference>
<dbReference type="GeneTree" id="ENSGT00950000182886"/>
<dbReference type="OMA" id="PHYALEW"/>
<dbReference type="Proteomes" id="UP000233100">
    <property type="component" value="Chromosome 6"/>
</dbReference>
<dbReference type="Bgee" id="ENSMFAG00000002749">
    <property type="expression patterns" value="Expressed in thymus and 8 other cell types or tissues"/>
</dbReference>
<dbReference type="GO" id="GO:0005789">
    <property type="term" value="C:endoplasmic reticulum membrane"/>
    <property type="evidence" value="ECO:0007669"/>
    <property type="project" value="UniProtKB-SubCell"/>
</dbReference>
<dbReference type="GO" id="GO:0047751">
    <property type="term" value="F:3-oxo-5-alpha-steroid 4-dehydrogenase (NADP+) activity"/>
    <property type="evidence" value="ECO:0007669"/>
    <property type="project" value="UniProtKB-EC"/>
</dbReference>
<dbReference type="GO" id="GO:0003865">
    <property type="term" value="F:3-oxo-5-alpha-steroid 4-dehydrogenase activity"/>
    <property type="evidence" value="ECO:0000250"/>
    <property type="project" value="UniProtKB"/>
</dbReference>
<dbReference type="GO" id="GO:0006702">
    <property type="term" value="P:androgen biosynthetic process"/>
    <property type="evidence" value="ECO:0007669"/>
    <property type="project" value="UniProtKB-ARBA"/>
</dbReference>
<dbReference type="GO" id="GO:0030154">
    <property type="term" value="P:cell differentiation"/>
    <property type="evidence" value="ECO:0007669"/>
    <property type="project" value="UniProtKB-KW"/>
</dbReference>
<dbReference type="GO" id="GO:0007548">
    <property type="term" value="P:sex differentiation"/>
    <property type="evidence" value="ECO:0007669"/>
    <property type="project" value="UniProtKB-KW"/>
</dbReference>
<dbReference type="FunFam" id="1.20.120.1630:FF:000002">
    <property type="entry name" value="Steroid 5 alpha-reductase 1"/>
    <property type="match status" value="1"/>
</dbReference>
<dbReference type="Gene3D" id="1.20.120.1630">
    <property type="match status" value="1"/>
</dbReference>
<dbReference type="InterPro" id="IPR016636">
    <property type="entry name" value="3-oxo-5-alpha-steroid_4-DH"/>
</dbReference>
<dbReference type="InterPro" id="IPR001104">
    <property type="entry name" value="3-oxo-5_a-steroid_4-DH_C"/>
</dbReference>
<dbReference type="InterPro" id="IPR039357">
    <property type="entry name" value="SRD5A/TECR"/>
</dbReference>
<dbReference type="PANTHER" id="PTHR10556">
    <property type="entry name" value="3-OXO-5-ALPHA-STEROID 4-DEHYDROGENASE"/>
    <property type="match status" value="1"/>
</dbReference>
<dbReference type="PANTHER" id="PTHR10556:SF57">
    <property type="entry name" value="3-OXO-5-ALPHA-STEROID 4-DEHYDROGENASE 1"/>
    <property type="match status" value="1"/>
</dbReference>
<dbReference type="Pfam" id="PF02544">
    <property type="entry name" value="Steroid_dh"/>
    <property type="match status" value="1"/>
</dbReference>
<dbReference type="PIRSF" id="PIRSF015596">
    <property type="entry name" value="5_alpha-SR2"/>
    <property type="match status" value="1"/>
</dbReference>
<dbReference type="PROSITE" id="PS50244">
    <property type="entry name" value="S5A_REDUCTASE"/>
    <property type="match status" value="1"/>
</dbReference>
<protein>
    <recommendedName>
        <fullName>3-oxo-5-alpha-steroid 4-dehydrogenase 1</fullName>
        <ecNumber evidence="1">1.3.1.22</ecNumber>
    </recommendedName>
    <alternativeName>
        <fullName>SR type 1</fullName>
    </alternativeName>
    <alternativeName>
        <fullName>Steroid 5-alpha-reductase 1</fullName>
        <shortName>S5AR 1</shortName>
    </alternativeName>
</protein>
<feature type="chain" id="PRO_0000213675" description="3-oxo-5-alpha-steroid 4-dehydrogenase 1">
    <location>
        <begin position="1"/>
        <end position="263"/>
    </location>
</feature>
<feature type="transmembrane region" description="Helical" evidence="3">
    <location>
        <begin position="16"/>
        <end position="33"/>
    </location>
</feature>
<feature type="transmembrane region" description="Helical" evidence="3">
    <location>
        <begin position="90"/>
        <end position="110"/>
    </location>
</feature>
<feature type="transmembrane region" description="Helical" evidence="3">
    <location>
        <begin position="115"/>
        <end position="135"/>
    </location>
</feature>
<feature type="transmembrane region" description="Helical" evidence="3">
    <location>
        <begin position="155"/>
        <end position="175"/>
    </location>
</feature>
<feature type="transmembrane region" description="Helical" evidence="3">
    <location>
        <begin position="213"/>
        <end position="233"/>
    </location>
</feature>
<reference key="1">
    <citation type="journal article" date="1995" name="J. Steroid Biochem. Mol. Biol.">
        <title>Cloning, expression and functional characterization of type 1 and type 2 steroid 5 alpha-reductases from Cynomolgus monkey: comparisons with human and rat isoenzymes.</title>
        <authorList>
            <person name="Levy M.A."/>
            <person name="Brandt M."/>
            <person name="Sheedy K.M."/>
            <person name="Holt D.A."/>
            <person name="Heaslip J.I."/>
            <person name="Trill J.J."/>
            <person name="Ryan P.J."/>
            <person name="Morris R.A."/>
            <person name="Garrison L.M."/>
            <person name="Bergsma D.J."/>
        </authorList>
    </citation>
    <scope>NUCLEOTIDE SEQUENCE [MRNA]</scope>
    <source>
        <tissue>Prostate</tissue>
    </source>
</reference>
<keyword id="KW-0221">Differentiation</keyword>
<keyword id="KW-0256">Endoplasmic reticulum</keyword>
<keyword id="KW-0443">Lipid metabolism</keyword>
<keyword id="KW-0472">Membrane</keyword>
<keyword id="KW-0492">Microsome</keyword>
<keyword id="KW-0521">NADP</keyword>
<keyword id="KW-0560">Oxidoreductase</keyword>
<keyword id="KW-1185">Reference proteome</keyword>
<keyword id="KW-0726">Sexual differentiation</keyword>
<keyword id="KW-0812">Transmembrane</keyword>
<keyword id="KW-1133">Transmembrane helix</keyword>
<comment type="function">
    <text evidence="2">Converts testosterone into 5-alpha-dihydrotestosterone and progesterone or corticosterone into their corresponding 5-alpha-3-oxosteroids. It plays a central role in sexual differentiation and androgen physiology.</text>
</comment>
<comment type="catalytic activity">
    <reaction evidence="2">
        <text>a 3-oxo-5alpha-steroid + NADP(+) = a 3-oxo-Delta(4)-steroid + NADPH + H(+)</text>
        <dbReference type="Rhea" id="RHEA:54384"/>
        <dbReference type="ChEBI" id="CHEBI:13601"/>
        <dbReference type="ChEBI" id="CHEBI:15378"/>
        <dbReference type="ChEBI" id="CHEBI:47909"/>
        <dbReference type="ChEBI" id="CHEBI:57783"/>
        <dbReference type="ChEBI" id="CHEBI:58349"/>
        <dbReference type="EC" id="1.3.1.22"/>
    </reaction>
    <physiologicalReaction direction="right-to-left" evidence="2">
        <dbReference type="Rhea" id="RHEA:54386"/>
    </physiologicalReaction>
</comment>
<comment type="catalytic activity">
    <reaction evidence="2">
        <text>5alpha-pregnane-3,20-dione + NADP(+) = progesterone + NADPH + H(+)</text>
        <dbReference type="Rhea" id="RHEA:21952"/>
        <dbReference type="ChEBI" id="CHEBI:15378"/>
        <dbReference type="ChEBI" id="CHEBI:17026"/>
        <dbReference type="ChEBI" id="CHEBI:28952"/>
        <dbReference type="ChEBI" id="CHEBI:57783"/>
        <dbReference type="ChEBI" id="CHEBI:58349"/>
        <dbReference type="EC" id="1.3.1.22"/>
    </reaction>
    <physiologicalReaction direction="right-to-left" evidence="2">
        <dbReference type="Rhea" id="RHEA:21954"/>
    </physiologicalReaction>
</comment>
<comment type="catalytic activity">
    <reaction evidence="2">
        <text>17beta-hydroxy-5alpha-androstan-3-one + NADP(+) = testosterone + NADPH + H(+)</text>
        <dbReference type="Rhea" id="RHEA:50820"/>
        <dbReference type="ChEBI" id="CHEBI:15378"/>
        <dbReference type="ChEBI" id="CHEBI:16330"/>
        <dbReference type="ChEBI" id="CHEBI:17347"/>
        <dbReference type="ChEBI" id="CHEBI:57783"/>
        <dbReference type="ChEBI" id="CHEBI:58349"/>
        <dbReference type="EC" id="1.3.1.22"/>
    </reaction>
    <physiologicalReaction direction="right-to-left" evidence="2">
        <dbReference type="Rhea" id="RHEA:50822"/>
    </physiologicalReaction>
</comment>
<comment type="catalytic activity">
    <reaction evidence="2">
        <text>androst-4-ene-3,17-dione + NADPH + H(+) = 5alpha-androstan-3,17-dione + NADP(+)</text>
        <dbReference type="Rhea" id="RHEA:50816"/>
        <dbReference type="ChEBI" id="CHEBI:15378"/>
        <dbReference type="ChEBI" id="CHEBI:15994"/>
        <dbReference type="ChEBI" id="CHEBI:16422"/>
        <dbReference type="ChEBI" id="CHEBI:57783"/>
        <dbReference type="ChEBI" id="CHEBI:58349"/>
    </reaction>
    <physiologicalReaction direction="left-to-right" evidence="2">
        <dbReference type="Rhea" id="RHEA:50817"/>
    </physiologicalReaction>
</comment>
<comment type="biophysicochemical properties">
    <phDependence>
        <text>Optimally active at alkaline pHs.</text>
    </phDependence>
</comment>
<comment type="subcellular location">
    <subcellularLocation>
        <location>Microsome membrane</location>
        <topology>Multi-pass membrane protein</topology>
    </subcellularLocation>
    <subcellularLocation>
        <location evidence="4">Endoplasmic reticulum membrane</location>
        <topology evidence="4">Multi-pass membrane protein</topology>
    </subcellularLocation>
</comment>
<comment type="similarity">
    <text evidence="4">Belongs to the steroid 5-alpha reductase family.</text>
</comment>
<sequence length="263" mass="30018">MATAVAEELLLAEERMLAALAYLQCAVGCAVLARNRETNLAYGRHASPSFRVRVPARAAWVVQELPSLALPLYQYASESAPRLRSAPNCILLAMFLVHYGHRCLIYPFLMRGGKPMPLLACTMAIMFCTFNGYLQSRYLSHWAVYADDWVTDPRFLIGFGLWLAGMLINIHSDHILRNLRKPGDTGYKIPRGGLFEYVTAANYFGEIMEWCGYALASWSVQGAAFAFFTFCFLSGRAKEHHRWYLQKFEEYPKFRKILIPFLF</sequence>
<accession>Q28891</accession>
<proteinExistence type="evidence at protein level"/>
<organism>
    <name type="scientific">Macaca fascicularis</name>
    <name type="common">Crab-eating macaque</name>
    <name type="synonym">Cynomolgus monkey</name>
    <dbReference type="NCBI Taxonomy" id="9541"/>
    <lineage>
        <taxon>Eukaryota</taxon>
        <taxon>Metazoa</taxon>
        <taxon>Chordata</taxon>
        <taxon>Craniata</taxon>
        <taxon>Vertebrata</taxon>
        <taxon>Euteleostomi</taxon>
        <taxon>Mammalia</taxon>
        <taxon>Eutheria</taxon>
        <taxon>Euarchontoglires</taxon>
        <taxon>Primates</taxon>
        <taxon>Haplorrhini</taxon>
        <taxon>Catarrhini</taxon>
        <taxon>Cercopithecidae</taxon>
        <taxon>Cercopithecinae</taxon>
        <taxon>Macaca</taxon>
    </lineage>
</organism>
<name>S5A1_MACFA</name>
<gene>
    <name type="primary">SRD5A1</name>
</gene>